<keyword id="KW-0053">Apoptosis</keyword>
<keyword id="KW-1040">Host Golgi apparatus</keyword>
<keyword id="KW-1043">Host membrane</keyword>
<keyword id="KW-0472">Membrane</keyword>
<keyword id="KW-0812">Transmembrane</keyword>
<keyword id="KW-1133">Transmembrane helix</keyword>
<name>VEMP_CVBOK</name>
<dbReference type="EMBL" id="AF058944">
    <property type="protein sequence ID" value="AAF25523.1"/>
    <property type="molecule type" value="Genomic_RNA"/>
</dbReference>
<dbReference type="RefSeq" id="NP_150081.1">
    <property type="nucleotide sequence ID" value="NC_003045.1"/>
</dbReference>
<dbReference type="GeneID" id="921685"/>
<dbReference type="KEGG" id="vg:921685"/>
<dbReference type="GO" id="GO:0044178">
    <property type="term" value="C:host cell Golgi membrane"/>
    <property type="evidence" value="ECO:0007669"/>
    <property type="project" value="UniProtKB-SubCell"/>
</dbReference>
<dbReference type="GO" id="GO:0016020">
    <property type="term" value="C:membrane"/>
    <property type="evidence" value="ECO:0007669"/>
    <property type="project" value="UniProtKB-UniRule"/>
</dbReference>
<dbReference type="GO" id="GO:0140975">
    <property type="term" value="P:disruption of cellular anatomical structure in another organism"/>
    <property type="evidence" value="ECO:0007669"/>
    <property type="project" value="UniProtKB-UniRule"/>
</dbReference>
<dbReference type="GO" id="GO:0046760">
    <property type="term" value="P:viral budding from Golgi membrane"/>
    <property type="evidence" value="ECO:0007669"/>
    <property type="project" value="UniProtKB-UniRule"/>
</dbReference>
<dbReference type="CDD" id="cd21532">
    <property type="entry name" value="HKU1-CoV-like_E"/>
    <property type="match status" value="1"/>
</dbReference>
<dbReference type="HAMAP" id="MF_04204">
    <property type="entry name" value="BETA_CORONA_E"/>
    <property type="match status" value="1"/>
</dbReference>
<dbReference type="InterPro" id="IPR043506">
    <property type="entry name" value="E_protein_bCoV"/>
</dbReference>
<dbReference type="InterPro" id="IPR003873">
    <property type="entry name" value="E_protein_CoV"/>
</dbReference>
<dbReference type="Pfam" id="PF02723">
    <property type="entry name" value="CoV_E"/>
    <property type="match status" value="1"/>
</dbReference>
<dbReference type="PROSITE" id="PS51926">
    <property type="entry name" value="COV_E"/>
    <property type="match status" value="1"/>
</dbReference>
<evidence type="ECO:0000255" key="1">
    <source>
        <dbReference type="HAMAP-Rule" id="MF_04204"/>
    </source>
</evidence>
<proteinExistence type="inferred from homology"/>
<organismHost>
    <name type="scientific">Bos taurus</name>
    <name type="common">Bovine</name>
    <dbReference type="NCBI Taxonomy" id="9913"/>
</organismHost>
<feature type="chain" id="PRO_0000283971" description="Envelope small membrane protein">
    <location>
        <begin position="1"/>
        <end position="84"/>
    </location>
</feature>
<feature type="topological domain" description="Virion surface" evidence="1">
    <location>
        <begin position="1"/>
        <end position="18"/>
    </location>
</feature>
<feature type="transmembrane region" description="Helical" evidence="1">
    <location>
        <begin position="19"/>
        <end position="39"/>
    </location>
</feature>
<feature type="topological domain" description="Intravirion" evidence="1">
    <location>
        <begin position="40"/>
        <end position="80"/>
    </location>
</feature>
<organism>
    <name type="scientific">Bovine coronavirus (strain OK-0514)</name>
    <name type="common">BCoV</name>
    <name type="synonym">BCV</name>
    <dbReference type="NCBI Taxonomy" id="231432"/>
    <lineage>
        <taxon>Viruses</taxon>
        <taxon>Riboviria</taxon>
        <taxon>Orthornavirae</taxon>
        <taxon>Pisuviricota</taxon>
        <taxon>Pisoniviricetes</taxon>
        <taxon>Nidovirales</taxon>
        <taxon>Cornidovirineae</taxon>
        <taxon>Coronaviridae</taxon>
        <taxon>Orthocoronavirinae</taxon>
        <taxon>Betacoronavirus</taxon>
        <taxon>Embecovirus</taxon>
        <taxon>Betacoronavirus 1</taxon>
    </lineage>
</organism>
<comment type="function">
    <text evidence="1">Plays a central role in virus morphogenesis and assembly. Acts as a viroporin and self-assembles in host membranes forming pentameric protein-lipid pores that allow ion transport. Also plays a role in the induction of apoptosis.</text>
</comment>
<comment type="subunit">
    <text evidence="1">Homopentamer. Interacts with membrane protein M in the budding compartment of the host cell, which is located between endoplasmic reticulum and the Golgi complex. Interacts with Nucleoprotein.</text>
</comment>
<comment type="subcellular location">
    <subcellularLocation>
        <location evidence="1">Host Golgi apparatus membrane</location>
        <topology evidence="1">Single-pass type III membrane protein</topology>
    </subcellularLocation>
    <text evidence="1">The cytoplasmic tail functions as a Golgi complex-targeting signal.</text>
</comment>
<comment type="similarity">
    <text evidence="1">Belongs to the betacoronaviruses E protein family.</text>
</comment>
<reference key="1">
    <citation type="journal article" date="1998" name="Virus Genes">
        <title>Nucleotide and predicted amino acid sequences of all genes encoded by the 3' genomic portion (9.5 kb) of respiratory bovine coronaviruses and comparisons among respiratory and enteric coronaviruses.</title>
        <authorList>
            <person name="Chouljenko V.N."/>
            <person name="Kousoulas K.G."/>
            <person name="Lin X.Q."/>
            <person name="Storz J."/>
        </authorList>
    </citation>
    <scope>NUCLEOTIDE SEQUENCE [GENOMIC RNA]</scope>
    <source>
        <strain>Isolate OK-0514-3</strain>
    </source>
</reference>
<sequence length="84" mass="9584">MFMADAYFADTVWYVGQIIFIVAICLLVIIVVVAFLATFKLCIQLCGMCNTLVLSPSIYVFNRGRQFYEFYNDVKPPVLDVDDV</sequence>
<gene>
    <name evidence="1" type="primary">E</name>
    <name type="synonym">sM</name>
    <name type="ORF">5b</name>
</gene>
<accession>P0C2Q5</accession>
<accession>Q77WX8</accession>
<accession>Q77WX9</accession>
<protein>
    <recommendedName>
        <fullName evidence="1">Envelope small membrane protein</fullName>
        <shortName evidence="1">E protein</shortName>
        <shortName evidence="1">sM protein</shortName>
    </recommendedName>
</protein>